<evidence type="ECO:0000250" key="1">
    <source>
        <dbReference type="UniProtKB" id="L0E2Z4"/>
    </source>
</evidence>
<evidence type="ECO:0000250" key="2">
    <source>
        <dbReference type="UniProtKB" id="O93868"/>
    </source>
</evidence>
<evidence type="ECO:0000250" key="3">
    <source>
        <dbReference type="UniProtKB" id="P38286"/>
    </source>
</evidence>
<evidence type="ECO:0000255" key="4">
    <source>
        <dbReference type="HAMAP-Rule" id="MF_03107"/>
    </source>
</evidence>
<sequence length="346" mass="37630">MDFLSKHTTCLSNLELNLAPGWQTVSAYFLLAAGSLFVASRALTFVRVLLSLFVLPGKSLRSFGPKGSWAVVTGASDGLGKEFSLQLARAGFNIVLVSRTASKLTTLSDEITSKYASVQTKTLAMDFARNEDSDYEKLKALVDELDVAILVNNVGKSHDIPTPFALTSQEEMTDIITINCMGTLRATQLIVPGMMQRKRGLILTMGSFGGLLPTPLLATYSGSKAFLQQWSTALGSELEEHGITVELVQAYLITSAMSKIRRASATIPDPRSFVKSVLSKIGRNGGSPSYAYSSSPYWSHGLMAYFLTCIAGTMGKFVTSKNRGMHESIRKRALRKAEREKAKKST</sequence>
<keyword id="KW-0256">Endoplasmic reticulum</keyword>
<keyword id="KW-0275">Fatty acid biosynthesis</keyword>
<keyword id="KW-0276">Fatty acid metabolism</keyword>
<keyword id="KW-0444">Lipid biosynthesis</keyword>
<keyword id="KW-0443">Lipid metabolism</keyword>
<keyword id="KW-0472">Membrane</keyword>
<keyword id="KW-0521">NADP</keyword>
<keyword id="KW-0560">Oxidoreductase</keyword>
<keyword id="KW-1185">Reference proteome</keyword>
<keyword id="KW-0812">Transmembrane</keyword>
<keyword id="KW-1133">Transmembrane helix</keyword>
<gene>
    <name type="ORF">AO090026000492</name>
</gene>
<protein>
    <recommendedName>
        <fullName evidence="4">Very-long-chain 3-oxoacyl-CoA reductase</fullName>
        <ecNumber evidence="4">1.1.1.330</ecNumber>
    </recommendedName>
    <alternativeName>
        <fullName evidence="4">3-ketoacyl-CoA reductase</fullName>
        <shortName evidence="4">3-ketoreductase</shortName>
        <shortName evidence="4">KAR</shortName>
    </alternativeName>
    <alternativeName>
        <fullName evidence="4">Microsomal beta-keto-reductase</fullName>
    </alternativeName>
</protein>
<accession>Q2UET3</accession>
<organism>
    <name type="scientific">Aspergillus oryzae (strain ATCC 42149 / RIB 40)</name>
    <name type="common">Yellow koji mold</name>
    <dbReference type="NCBI Taxonomy" id="510516"/>
    <lineage>
        <taxon>Eukaryota</taxon>
        <taxon>Fungi</taxon>
        <taxon>Dikarya</taxon>
        <taxon>Ascomycota</taxon>
        <taxon>Pezizomycotina</taxon>
        <taxon>Eurotiomycetes</taxon>
        <taxon>Eurotiomycetidae</taxon>
        <taxon>Eurotiales</taxon>
        <taxon>Aspergillaceae</taxon>
        <taxon>Aspergillus</taxon>
        <taxon>Aspergillus subgen. Circumdati</taxon>
    </lineage>
</organism>
<comment type="function">
    <text evidence="4">Component of the microsomal membrane bound fatty acid elongation system, which produces the 26-carbon very long-chain fatty acids (VLCFA) from palmitate. Catalyzes the reduction of the 3-ketoacyl-CoA intermediate that is formed in each cycle of fatty acid elongation. VLCFAs serve as precursors for ceramide and sphingolipids.</text>
</comment>
<comment type="catalytic activity">
    <reaction evidence="4">
        <text>a very-long-chain (3R)-3-hydroxyacyl-CoA + NADP(+) = a very-long-chain 3-oxoacyl-CoA + NADPH + H(+)</text>
        <dbReference type="Rhea" id="RHEA:48680"/>
        <dbReference type="ChEBI" id="CHEBI:15378"/>
        <dbReference type="ChEBI" id="CHEBI:57783"/>
        <dbReference type="ChEBI" id="CHEBI:58349"/>
        <dbReference type="ChEBI" id="CHEBI:85440"/>
        <dbReference type="ChEBI" id="CHEBI:90725"/>
        <dbReference type="EC" id="1.1.1.330"/>
    </reaction>
</comment>
<comment type="pathway">
    <text evidence="3">Lipid metabolism; fatty acid biosynthesis.</text>
</comment>
<comment type="subcellular location">
    <subcellularLocation>
        <location evidence="4">Endoplasmic reticulum membrane</location>
        <topology evidence="4">Single-pass membrane protein</topology>
    </subcellularLocation>
</comment>
<comment type="similarity">
    <text evidence="4">Belongs to the short-chain dehydrogenases/reductases (SDR) family.</text>
</comment>
<reference key="1">
    <citation type="journal article" date="2005" name="Nature">
        <title>Genome sequencing and analysis of Aspergillus oryzae.</title>
        <authorList>
            <person name="Machida M."/>
            <person name="Asai K."/>
            <person name="Sano M."/>
            <person name="Tanaka T."/>
            <person name="Kumagai T."/>
            <person name="Terai G."/>
            <person name="Kusumoto K."/>
            <person name="Arima T."/>
            <person name="Akita O."/>
            <person name="Kashiwagi Y."/>
            <person name="Abe K."/>
            <person name="Gomi K."/>
            <person name="Horiuchi H."/>
            <person name="Kitamoto K."/>
            <person name="Kobayashi T."/>
            <person name="Takeuchi M."/>
            <person name="Denning D.W."/>
            <person name="Galagan J.E."/>
            <person name="Nierman W.C."/>
            <person name="Yu J."/>
            <person name="Archer D.B."/>
            <person name="Bennett J.W."/>
            <person name="Bhatnagar D."/>
            <person name="Cleveland T.E."/>
            <person name="Fedorova N.D."/>
            <person name="Gotoh O."/>
            <person name="Horikawa H."/>
            <person name="Hosoyama A."/>
            <person name="Ichinomiya M."/>
            <person name="Igarashi R."/>
            <person name="Iwashita K."/>
            <person name="Juvvadi P.R."/>
            <person name="Kato M."/>
            <person name="Kato Y."/>
            <person name="Kin T."/>
            <person name="Kokubun A."/>
            <person name="Maeda H."/>
            <person name="Maeyama N."/>
            <person name="Maruyama J."/>
            <person name="Nagasaki H."/>
            <person name="Nakajima T."/>
            <person name="Oda K."/>
            <person name="Okada K."/>
            <person name="Paulsen I."/>
            <person name="Sakamoto K."/>
            <person name="Sawano T."/>
            <person name="Takahashi M."/>
            <person name="Takase K."/>
            <person name="Terabayashi Y."/>
            <person name="Wortman J.R."/>
            <person name="Yamada O."/>
            <person name="Yamagata Y."/>
            <person name="Anazawa H."/>
            <person name="Hata Y."/>
            <person name="Koide Y."/>
            <person name="Komori T."/>
            <person name="Koyama Y."/>
            <person name="Minetoki T."/>
            <person name="Suharnan S."/>
            <person name="Tanaka A."/>
            <person name="Isono K."/>
            <person name="Kuhara S."/>
            <person name="Ogasawara N."/>
            <person name="Kikuchi H."/>
        </authorList>
    </citation>
    <scope>NUCLEOTIDE SEQUENCE [LARGE SCALE GENOMIC DNA]</scope>
    <source>
        <strain>ATCC 42149 / RIB 40</strain>
    </source>
</reference>
<proteinExistence type="inferred from homology"/>
<dbReference type="EC" id="1.1.1.330" evidence="4"/>
<dbReference type="EMBL" id="BA000051">
    <property type="protein sequence ID" value="BAE59932.1"/>
    <property type="molecule type" value="Genomic_DNA"/>
</dbReference>
<dbReference type="RefSeq" id="XP_001821934.1">
    <property type="nucleotide sequence ID" value="XM_001821882.3"/>
</dbReference>
<dbReference type="SMR" id="Q2UET3"/>
<dbReference type="STRING" id="510516.Q2UET3"/>
<dbReference type="EnsemblFungi" id="BAE59932">
    <property type="protein sequence ID" value="BAE59932"/>
    <property type="gene ID" value="AO090026000492"/>
</dbReference>
<dbReference type="GeneID" id="5993962"/>
<dbReference type="KEGG" id="aor:AO090026000492"/>
<dbReference type="VEuPathDB" id="FungiDB:AO090026000492"/>
<dbReference type="HOGENOM" id="CLU_010194_38_0_1"/>
<dbReference type="OMA" id="LVAPGMM"/>
<dbReference type="OrthoDB" id="48709at5052"/>
<dbReference type="UniPathway" id="UPA00094"/>
<dbReference type="Proteomes" id="UP000006564">
    <property type="component" value="Chromosome 3"/>
</dbReference>
<dbReference type="GO" id="GO:0005789">
    <property type="term" value="C:endoplasmic reticulum membrane"/>
    <property type="evidence" value="ECO:0007669"/>
    <property type="project" value="UniProtKB-SubCell"/>
</dbReference>
<dbReference type="GO" id="GO:0045703">
    <property type="term" value="F:ketoreductase activity"/>
    <property type="evidence" value="ECO:0007669"/>
    <property type="project" value="UniProtKB-UniRule"/>
</dbReference>
<dbReference type="GO" id="GO:0141040">
    <property type="term" value="F:very-long-chain 3-oxoacyl-CoA reductase activity"/>
    <property type="evidence" value="ECO:0007669"/>
    <property type="project" value="UniProtKB-EC"/>
</dbReference>
<dbReference type="GO" id="GO:0030497">
    <property type="term" value="P:fatty acid elongation"/>
    <property type="evidence" value="ECO:0007669"/>
    <property type="project" value="UniProtKB-UniRule"/>
</dbReference>
<dbReference type="GO" id="GO:0044550">
    <property type="term" value="P:secondary metabolite biosynthetic process"/>
    <property type="evidence" value="ECO:0007669"/>
    <property type="project" value="UniProtKB-ARBA"/>
</dbReference>
<dbReference type="GO" id="GO:0030148">
    <property type="term" value="P:sphingolipid biosynthetic process"/>
    <property type="evidence" value="ECO:0007669"/>
    <property type="project" value="EnsemblFungi"/>
</dbReference>
<dbReference type="GO" id="GO:0042761">
    <property type="term" value="P:very long-chain fatty acid biosynthetic process"/>
    <property type="evidence" value="ECO:0007669"/>
    <property type="project" value="EnsemblFungi"/>
</dbReference>
<dbReference type="CDD" id="cd05356">
    <property type="entry name" value="17beta-HSD1_like_SDR_c"/>
    <property type="match status" value="1"/>
</dbReference>
<dbReference type="FunFam" id="3.40.50.720:FF:000317">
    <property type="entry name" value="Very-long-chain 3-oxoacyl-CoA reductase"/>
    <property type="match status" value="1"/>
</dbReference>
<dbReference type="Gene3D" id="3.40.50.720">
    <property type="entry name" value="NAD(P)-binding Rossmann-like Domain"/>
    <property type="match status" value="1"/>
</dbReference>
<dbReference type="HAMAP" id="MF_03107">
    <property type="entry name" value="3_ketoreductase"/>
    <property type="match status" value="1"/>
</dbReference>
<dbReference type="InterPro" id="IPR027533">
    <property type="entry name" value="3_ketoreductase_fungal"/>
</dbReference>
<dbReference type="InterPro" id="IPR036291">
    <property type="entry name" value="NAD(P)-bd_dom_sf"/>
</dbReference>
<dbReference type="InterPro" id="IPR020904">
    <property type="entry name" value="Sc_DH/Rdtase_CS"/>
</dbReference>
<dbReference type="InterPro" id="IPR002347">
    <property type="entry name" value="SDR_fam"/>
</dbReference>
<dbReference type="PANTHER" id="PTHR43086:SF2">
    <property type="entry name" value="HYDROXYSTEROID DEHYDROGENASE-LIKE PROTEIN 1"/>
    <property type="match status" value="1"/>
</dbReference>
<dbReference type="PANTHER" id="PTHR43086">
    <property type="entry name" value="VERY-LONG-CHAIN 3-OXOOACYL-COA REDUCTASE"/>
    <property type="match status" value="1"/>
</dbReference>
<dbReference type="Pfam" id="PF00106">
    <property type="entry name" value="adh_short"/>
    <property type="match status" value="1"/>
</dbReference>
<dbReference type="PIRSF" id="PIRSF000126">
    <property type="entry name" value="11-beta-HSD1"/>
    <property type="match status" value="1"/>
</dbReference>
<dbReference type="PRINTS" id="PR00081">
    <property type="entry name" value="GDHRDH"/>
</dbReference>
<dbReference type="SUPFAM" id="SSF51735">
    <property type="entry name" value="NAD(P)-binding Rossmann-fold domains"/>
    <property type="match status" value="1"/>
</dbReference>
<dbReference type="PROSITE" id="PS00061">
    <property type="entry name" value="ADH_SHORT"/>
    <property type="match status" value="1"/>
</dbReference>
<name>MKAR_ASPOR</name>
<feature type="chain" id="PRO_0000357299" description="Very-long-chain 3-oxoacyl-CoA reductase">
    <location>
        <begin position="1"/>
        <end position="346"/>
    </location>
</feature>
<feature type="transmembrane region" description="Helical" evidence="4">
    <location>
        <begin position="26"/>
        <end position="46"/>
    </location>
</feature>
<feature type="active site" description="Proton donor" evidence="2">
    <location>
        <position position="220"/>
    </location>
</feature>
<feature type="active site" description="Lowers pKa of active site Tyr" evidence="2">
    <location>
        <position position="224"/>
    </location>
</feature>
<feature type="binding site" evidence="1">
    <location>
        <position position="71"/>
    </location>
    <ligand>
        <name>NADP(+)</name>
        <dbReference type="ChEBI" id="CHEBI:58349"/>
    </ligand>
</feature>
<feature type="binding site" evidence="1">
    <location>
        <position position="126"/>
    </location>
    <ligand>
        <name>NADP(+)</name>
        <dbReference type="ChEBI" id="CHEBI:58349"/>
    </ligand>
</feature>
<feature type="binding site" evidence="1">
    <location>
        <position position="134"/>
    </location>
    <ligand>
        <name>NADP(+)</name>
        <dbReference type="ChEBI" id="CHEBI:58349"/>
    </ligand>
</feature>
<feature type="binding site" evidence="2">
    <location>
        <position position="153"/>
    </location>
    <ligand>
        <name>NADP(+)</name>
        <dbReference type="ChEBI" id="CHEBI:58349"/>
    </ligand>
</feature>
<feature type="binding site" evidence="2">
    <location>
        <position position="220"/>
    </location>
    <ligand>
        <name>NADP(+)</name>
        <dbReference type="ChEBI" id="CHEBI:58349"/>
    </ligand>
</feature>
<feature type="binding site" evidence="2">
    <location>
        <position position="224"/>
    </location>
    <ligand>
        <name>NADP(+)</name>
        <dbReference type="ChEBI" id="CHEBI:58349"/>
    </ligand>
</feature>
<feature type="binding site" evidence="2">
    <location>
        <position position="253"/>
    </location>
    <ligand>
        <name>NADP(+)</name>
        <dbReference type="ChEBI" id="CHEBI:58349"/>
    </ligand>
</feature>
<feature type="binding site" evidence="1">
    <location>
        <position position="255"/>
    </location>
    <ligand>
        <name>NADP(+)</name>
        <dbReference type="ChEBI" id="CHEBI:58349"/>
    </ligand>
</feature>